<proteinExistence type="inferred from homology"/>
<evidence type="ECO:0000250" key="1"/>
<evidence type="ECO:0000255" key="2">
    <source>
        <dbReference type="PROSITE-ProRule" id="PRU10011"/>
    </source>
</evidence>
<evidence type="ECO:0000305" key="3"/>
<protein>
    <recommendedName>
        <fullName>NADP-specific glutamate dehydrogenase 1</fullName>
        <shortName>NADP-GDH 1</shortName>
        <ecNumber>1.4.1.4</ecNumber>
    </recommendedName>
    <alternativeName>
        <fullName>NADP-dependent glutamate dehydrogenase 1</fullName>
    </alternativeName>
</protein>
<name>DHE4_SACU7</name>
<dbReference type="EC" id="1.4.1.4"/>
<dbReference type="EMBL" id="AJ418037">
    <property type="protein sequence ID" value="CAD10750.1"/>
    <property type="molecule type" value="Genomic_DNA"/>
</dbReference>
<dbReference type="SMR" id="Q8TFF6"/>
<dbReference type="IntAct" id="Q8TFF6">
    <property type="interactions" value="1"/>
</dbReference>
<dbReference type="MINT" id="Q8TFF6"/>
<dbReference type="GO" id="GO:0005829">
    <property type="term" value="C:cytosol"/>
    <property type="evidence" value="ECO:0007669"/>
    <property type="project" value="TreeGrafter"/>
</dbReference>
<dbReference type="GO" id="GO:0004354">
    <property type="term" value="F:glutamate dehydrogenase (NADP+) activity"/>
    <property type="evidence" value="ECO:0007669"/>
    <property type="project" value="UniProtKB-EC"/>
</dbReference>
<dbReference type="GO" id="GO:0006537">
    <property type="term" value="P:glutamate biosynthetic process"/>
    <property type="evidence" value="ECO:0007669"/>
    <property type="project" value="TreeGrafter"/>
</dbReference>
<dbReference type="CDD" id="cd05313">
    <property type="entry name" value="NAD_bind_2_Glu_DH"/>
    <property type="match status" value="1"/>
</dbReference>
<dbReference type="FunFam" id="1.10.285.10:FF:000001">
    <property type="entry name" value="Glutamate dehydrogenase"/>
    <property type="match status" value="1"/>
</dbReference>
<dbReference type="FunFam" id="1.10.285.10:FF:000003">
    <property type="entry name" value="Glutamate dehydrogenase"/>
    <property type="match status" value="1"/>
</dbReference>
<dbReference type="FunFam" id="3.40.50.10860:FF:000002">
    <property type="entry name" value="Glutamate dehydrogenase"/>
    <property type="match status" value="1"/>
</dbReference>
<dbReference type="FunFam" id="3.40.50.720:FF:000030">
    <property type="entry name" value="Glutamate dehydrogenase"/>
    <property type="match status" value="1"/>
</dbReference>
<dbReference type="Gene3D" id="1.10.285.10">
    <property type="entry name" value="Glutamate Dehydrogenase, chain A, domain 3"/>
    <property type="match status" value="2"/>
</dbReference>
<dbReference type="Gene3D" id="3.40.50.10860">
    <property type="entry name" value="Leucine Dehydrogenase, chain A, domain 1"/>
    <property type="match status" value="1"/>
</dbReference>
<dbReference type="Gene3D" id="3.40.50.720">
    <property type="entry name" value="NAD(P)-binding Rossmann-like Domain"/>
    <property type="match status" value="1"/>
</dbReference>
<dbReference type="InterPro" id="IPR046346">
    <property type="entry name" value="Aminoacid_DH-like_N_sf"/>
</dbReference>
<dbReference type="InterPro" id="IPR006095">
    <property type="entry name" value="Glu/Leu/Phe/Val/Trp_DH"/>
</dbReference>
<dbReference type="InterPro" id="IPR006096">
    <property type="entry name" value="Glu/Leu/Phe/Val/Trp_DH_C"/>
</dbReference>
<dbReference type="InterPro" id="IPR006097">
    <property type="entry name" value="Glu/Leu/Phe/Val/Trp_DH_dimer"/>
</dbReference>
<dbReference type="InterPro" id="IPR033524">
    <property type="entry name" value="Glu/Leu/Phe/Val_DH_AS"/>
</dbReference>
<dbReference type="InterPro" id="IPR014362">
    <property type="entry name" value="Glu_DH"/>
</dbReference>
<dbReference type="InterPro" id="IPR050724">
    <property type="entry name" value="Glu_Leu_Phe_Val_DH"/>
</dbReference>
<dbReference type="InterPro" id="IPR036291">
    <property type="entry name" value="NAD(P)-bd_dom_sf"/>
</dbReference>
<dbReference type="InterPro" id="IPR033922">
    <property type="entry name" value="NAD_bind_Glu_DH"/>
</dbReference>
<dbReference type="NCBIfam" id="NF006929">
    <property type="entry name" value="PRK09414.1"/>
    <property type="match status" value="1"/>
</dbReference>
<dbReference type="PANTHER" id="PTHR43571">
    <property type="entry name" value="NADP-SPECIFIC GLUTAMATE DEHYDROGENASE 1-RELATED"/>
    <property type="match status" value="1"/>
</dbReference>
<dbReference type="PANTHER" id="PTHR43571:SF1">
    <property type="entry name" value="NADP-SPECIFIC GLUTAMATE DEHYDROGENASE 1-RELATED"/>
    <property type="match status" value="1"/>
</dbReference>
<dbReference type="Pfam" id="PF00208">
    <property type="entry name" value="ELFV_dehydrog"/>
    <property type="match status" value="1"/>
</dbReference>
<dbReference type="Pfam" id="PF02812">
    <property type="entry name" value="ELFV_dehydrog_N"/>
    <property type="match status" value="1"/>
</dbReference>
<dbReference type="PIRSF" id="PIRSF000185">
    <property type="entry name" value="Glu_DH"/>
    <property type="match status" value="1"/>
</dbReference>
<dbReference type="PRINTS" id="PR00082">
    <property type="entry name" value="GLFDHDRGNASE"/>
</dbReference>
<dbReference type="SMART" id="SM00839">
    <property type="entry name" value="ELFV_dehydrog"/>
    <property type="match status" value="1"/>
</dbReference>
<dbReference type="SUPFAM" id="SSF53223">
    <property type="entry name" value="Aminoacid dehydrogenase-like, N-terminal domain"/>
    <property type="match status" value="1"/>
</dbReference>
<dbReference type="SUPFAM" id="SSF51735">
    <property type="entry name" value="NAD(P)-binding Rossmann-fold domains"/>
    <property type="match status" value="1"/>
</dbReference>
<dbReference type="PROSITE" id="PS00074">
    <property type="entry name" value="GLFV_DEHYDROGENASE"/>
    <property type="match status" value="1"/>
</dbReference>
<keyword id="KW-0521">NADP</keyword>
<keyword id="KW-0560">Oxidoreductase</keyword>
<accession>Q8TFF6</accession>
<feature type="chain" id="PRO_0000182797" description="NADP-specific glutamate dehydrogenase 1">
    <location>
        <begin position="1"/>
        <end position="454"/>
    </location>
</feature>
<feature type="active site" evidence="2">
    <location>
        <position position="110"/>
    </location>
</feature>
<feature type="binding site" evidence="1">
    <location>
        <begin position="174"/>
        <end position="203"/>
    </location>
    <ligand>
        <name>NAD(+)</name>
        <dbReference type="ChEBI" id="CHEBI:57540"/>
    </ligand>
</feature>
<gene>
    <name type="primary">GDH1</name>
</gene>
<reference key="1">
    <citation type="submission" date="2001-10" db="EMBL/GenBank/DDBJ databases">
        <title>New S. pastorianus strains and Saccharomyces natural hybrids revealed by polyphasis identification of CBS strains formerly uncompletely identified by conventional method.</title>
        <authorList>
            <person name="Nguyen H.V."/>
        </authorList>
    </citation>
    <scope>NUCLEOTIDE SEQUENCE [GENOMIC DNA]</scope>
    <source>
        <strain>623-6C / CBS 9787 / CLIB 533</strain>
    </source>
</reference>
<comment type="catalytic activity">
    <reaction>
        <text>L-glutamate + NADP(+) + H2O = 2-oxoglutarate + NH4(+) + NADPH + H(+)</text>
        <dbReference type="Rhea" id="RHEA:11612"/>
        <dbReference type="ChEBI" id="CHEBI:15377"/>
        <dbReference type="ChEBI" id="CHEBI:15378"/>
        <dbReference type="ChEBI" id="CHEBI:16810"/>
        <dbReference type="ChEBI" id="CHEBI:28938"/>
        <dbReference type="ChEBI" id="CHEBI:29985"/>
        <dbReference type="ChEBI" id="CHEBI:57783"/>
        <dbReference type="ChEBI" id="CHEBI:58349"/>
        <dbReference type="EC" id="1.4.1.4"/>
    </reaction>
</comment>
<comment type="subunit">
    <text evidence="1">Homohexamer.</text>
</comment>
<comment type="similarity">
    <text evidence="3">Belongs to the Glu/Leu/Phe/Val dehydrogenases family.</text>
</comment>
<organism>
    <name type="scientific">Saccharomyces uvarum (strain ATCC 76518 / CBS 7001 / CLIB 283 / NBRC 10550 / MCYC 623 / NCYC 2669 / NRRL Y-11845)</name>
    <name type="common">Yeast</name>
    <name type="synonym">Saccharomyces bayanus var. uvarum</name>
    <dbReference type="NCBI Taxonomy" id="659244"/>
    <lineage>
        <taxon>Eukaryota</taxon>
        <taxon>Fungi</taxon>
        <taxon>Dikarya</taxon>
        <taxon>Ascomycota</taxon>
        <taxon>Saccharomycotina</taxon>
        <taxon>Saccharomycetes</taxon>
        <taxon>Saccharomycetales</taxon>
        <taxon>Saccharomycetaceae</taxon>
        <taxon>Saccharomyces</taxon>
    </lineage>
</organism>
<sequence length="454" mass="49425">MSEPEFQQAYDEVVSSLEDSTLFEQHPKYRKVLPIVSVPERIIQFRVTWENDKGEQEVAQGYRVQYNSAKGPYKGGLRFHPSVNLSILKFLGFEQIFKNSLTGLDMGGGKGGLCVDLKGRSNNEIRRICYAFMRELSRHIGQDTDVPAGDIGVGGREIGYLFGAYRTYKNSWEGVLTGKGLNWGGSLIRPEATGYGLVYYTQAMIDYATNGKESFEGKRVTISGSGNVAQFAALKVIELGGTVVSLSDSKGCIISETGITSEQVADISSAKVNFKSLEQIVGEYSTFTENKVQYISGARPWTHVQKVDIALPCATQNEVSGDEAKALVAQGVKFVAEGSNMGSTPEAIAVFETARATASTLKESVWYGPPKAANLGGVAVSGLEMAQNSQRITWSSERVDQELKKIMVNCFNECIDSAKKYTKEGNALPSLVKGANIASFIKVSDAMFDQGDVF</sequence>